<dbReference type="EMBL" id="CP000671">
    <property type="protein sequence ID" value="ABQ98942.1"/>
    <property type="molecule type" value="Genomic_DNA"/>
</dbReference>
<dbReference type="SMR" id="A5UDU1"/>
<dbReference type="KEGG" id="hip:CGSHiEE_08145"/>
<dbReference type="HOGENOM" id="CLU_058591_0_2_6"/>
<dbReference type="GO" id="GO:0022627">
    <property type="term" value="C:cytosolic small ribosomal subunit"/>
    <property type="evidence" value="ECO:0007669"/>
    <property type="project" value="TreeGrafter"/>
</dbReference>
<dbReference type="GO" id="GO:0003729">
    <property type="term" value="F:mRNA binding"/>
    <property type="evidence" value="ECO:0007669"/>
    <property type="project" value="UniProtKB-UniRule"/>
</dbReference>
<dbReference type="GO" id="GO:0019843">
    <property type="term" value="F:rRNA binding"/>
    <property type="evidence" value="ECO:0007669"/>
    <property type="project" value="UniProtKB-UniRule"/>
</dbReference>
<dbReference type="GO" id="GO:0003735">
    <property type="term" value="F:structural constituent of ribosome"/>
    <property type="evidence" value="ECO:0007669"/>
    <property type="project" value="InterPro"/>
</dbReference>
<dbReference type="GO" id="GO:0006412">
    <property type="term" value="P:translation"/>
    <property type="evidence" value="ECO:0007669"/>
    <property type="project" value="UniProtKB-UniRule"/>
</dbReference>
<dbReference type="CDD" id="cd02412">
    <property type="entry name" value="KH-II_30S_S3"/>
    <property type="match status" value="1"/>
</dbReference>
<dbReference type="FunFam" id="3.30.1140.32:FF:000001">
    <property type="entry name" value="30S ribosomal protein S3"/>
    <property type="match status" value="1"/>
</dbReference>
<dbReference type="FunFam" id="3.30.300.20:FF:000001">
    <property type="entry name" value="30S ribosomal protein S3"/>
    <property type="match status" value="1"/>
</dbReference>
<dbReference type="Gene3D" id="3.30.300.20">
    <property type="match status" value="1"/>
</dbReference>
<dbReference type="Gene3D" id="3.30.1140.32">
    <property type="entry name" value="Ribosomal protein S3, C-terminal domain"/>
    <property type="match status" value="1"/>
</dbReference>
<dbReference type="HAMAP" id="MF_01309_B">
    <property type="entry name" value="Ribosomal_uS3_B"/>
    <property type="match status" value="1"/>
</dbReference>
<dbReference type="InterPro" id="IPR004087">
    <property type="entry name" value="KH_dom"/>
</dbReference>
<dbReference type="InterPro" id="IPR015946">
    <property type="entry name" value="KH_dom-like_a/b"/>
</dbReference>
<dbReference type="InterPro" id="IPR004044">
    <property type="entry name" value="KH_dom_type_2"/>
</dbReference>
<dbReference type="InterPro" id="IPR009019">
    <property type="entry name" value="KH_sf_prok-type"/>
</dbReference>
<dbReference type="InterPro" id="IPR036419">
    <property type="entry name" value="Ribosomal_S3_C_sf"/>
</dbReference>
<dbReference type="InterPro" id="IPR005704">
    <property type="entry name" value="Ribosomal_uS3_bac-typ"/>
</dbReference>
<dbReference type="InterPro" id="IPR001351">
    <property type="entry name" value="Ribosomal_uS3_C"/>
</dbReference>
<dbReference type="InterPro" id="IPR018280">
    <property type="entry name" value="Ribosomal_uS3_CS"/>
</dbReference>
<dbReference type="NCBIfam" id="TIGR01009">
    <property type="entry name" value="rpsC_bact"/>
    <property type="match status" value="1"/>
</dbReference>
<dbReference type="PANTHER" id="PTHR11760">
    <property type="entry name" value="30S/40S RIBOSOMAL PROTEIN S3"/>
    <property type="match status" value="1"/>
</dbReference>
<dbReference type="PANTHER" id="PTHR11760:SF19">
    <property type="entry name" value="SMALL RIBOSOMAL SUBUNIT PROTEIN US3C"/>
    <property type="match status" value="1"/>
</dbReference>
<dbReference type="Pfam" id="PF07650">
    <property type="entry name" value="KH_2"/>
    <property type="match status" value="1"/>
</dbReference>
<dbReference type="Pfam" id="PF00189">
    <property type="entry name" value="Ribosomal_S3_C"/>
    <property type="match status" value="1"/>
</dbReference>
<dbReference type="SMART" id="SM00322">
    <property type="entry name" value="KH"/>
    <property type="match status" value="1"/>
</dbReference>
<dbReference type="SUPFAM" id="SSF54814">
    <property type="entry name" value="Prokaryotic type KH domain (KH-domain type II)"/>
    <property type="match status" value="1"/>
</dbReference>
<dbReference type="SUPFAM" id="SSF54821">
    <property type="entry name" value="Ribosomal protein S3 C-terminal domain"/>
    <property type="match status" value="1"/>
</dbReference>
<dbReference type="PROSITE" id="PS50823">
    <property type="entry name" value="KH_TYPE_2"/>
    <property type="match status" value="1"/>
</dbReference>
<dbReference type="PROSITE" id="PS00548">
    <property type="entry name" value="RIBOSOMAL_S3"/>
    <property type="match status" value="1"/>
</dbReference>
<gene>
    <name evidence="1" type="primary">rpsC</name>
    <name type="ordered locus">CGSHiEE_08145</name>
</gene>
<comment type="function">
    <text evidence="1">Binds the lower part of the 30S subunit head. Binds mRNA in the 70S ribosome, positioning it for translation.</text>
</comment>
<comment type="subunit">
    <text evidence="1">Part of the 30S ribosomal subunit. Forms a tight complex with proteins S10 and S14.</text>
</comment>
<comment type="similarity">
    <text evidence="1">Belongs to the universal ribosomal protein uS3 family.</text>
</comment>
<organism>
    <name type="scientific">Haemophilus influenzae (strain PittEE)</name>
    <dbReference type="NCBI Taxonomy" id="374930"/>
    <lineage>
        <taxon>Bacteria</taxon>
        <taxon>Pseudomonadati</taxon>
        <taxon>Pseudomonadota</taxon>
        <taxon>Gammaproteobacteria</taxon>
        <taxon>Pasteurellales</taxon>
        <taxon>Pasteurellaceae</taxon>
        <taxon>Haemophilus</taxon>
    </lineage>
</organism>
<evidence type="ECO:0000255" key="1">
    <source>
        <dbReference type="HAMAP-Rule" id="MF_01309"/>
    </source>
</evidence>
<evidence type="ECO:0000256" key="2">
    <source>
        <dbReference type="SAM" id="MobiDB-lite"/>
    </source>
</evidence>
<evidence type="ECO:0000305" key="3"/>
<reference key="1">
    <citation type="journal article" date="2007" name="Genome Biol.">
        <title>Characterization and modeling of the Haemophilus influenzae core and supragenomes based on the complete genomic sequences of Rd and 12 clinical nontypeable strains.</title>
        <authorList>
            <person name="Hogg J.S."/>
            <person name="Hu F.Z."/>
            <person name="Janto B."/>
            <person name="Boissy R."/>
            <person name="Hayes J."/>
            <person name="Keefe R."/>
            <person name="Post J.C."/>
            <person name="Ehrlich G.D."/>
        </authorList>
    </citation>
    <scope>NUCLEOTIDE SEQUENCE [LARGE SCALE GENOMIC DNA]</scope>
    <source>
        <strain>PittEE</strain>
    </source>
</reference>
<proteinExistence type="inferred from homology"/>
<feature type="chain" id="PRO_0000323295" description="Small ribosomal subunit protein uS3">
    <location>
        <begin position="1"/>
        <end position="235"/>
    </location>
</feature>
<feature type="domain" description="KH type-2" evidence="1">
    <location>
        <begin position="39"/>
        <end position="107"/>
    </location>
</feature>
<feature type="region of interest" description="Disordered" evidence="2">
    <location>
        <begin position="215"/>
        <end position="235"/>
    </location>
</feature>
<name>RS3_HAEIE</name>
<keyword id="KW-0687">Ribonucleoprotein</keyword>
<keyword id="KW-0689">Ribosomal protein</keyword>
<keyword id="KW-0694">RNA-binding</keyword>
<keyword id="KW-0699">rRNA-binding</keyword>
<accession>A5UDU1</accession>
<sequence length="235" mass="25879">MGQKVHPHGIRLGIVKPWSSTWFANTQDFADNLEGDFKVRKFLNKELANASVSRITIERPAKSIRVTIHTARPGIVIGKKGEDVEKLRNAVSKIAGVPAQINIAEVKKPELDAKLVADSIASQLERRVMFRRAMKRAVQSAMRLGAKGIKVEVSGRLGGAEIARSEWYREGRVPLHTLRADIDYNTAEAHTTYGVIGVKVWIFKGEILGGMAAVAQSEQQPADKPKKAPRGKGRK</sequence>
<protein>
    <recommendedName>
        <fullName evidence="1">Small ribosomal subunit protein uS3</fullName>
    </recommendedName>
    <alternativeName>
        <fullName evidence="3">30S ribosomal protein S3</fullName>
    </alternativeName>
</protein>